<gene>
    <name evidence="1" type="primary">groEL3</name>
    <name evidence="1" type="synonym">groL3</name>
    <name type="ordered locus">SYNAS_17210</name>
    <name type="ORF">SYN_01909</name>
</gene>
<sequence>MPAKEIKYDMQAREKIMKGVDTLANAVKVTLGPKGRNVAIAKSWGAPQVTKDGVTVAKEIELEDKFENMGAQMVKEVASKTSDKAGDGTTTATVLAQAIYREGSKLVVSGMNPMSLKRGIDKGVALVVDELKKRSKTISDKKEIAQIGTISANNDATIGNIISEAMEKVGKDGVITVEEAKGMETELEIVEGMQFDRGYVSPYFVTDAEKMEVRLDDPYILLHEKKISAMKDMVPLLEQIAKTGKPLLLVAEDIEGEALATLVVNKMRGTLKCVAVKAPGFGDRRKAMLQDIAVLTGGNLISEDVGIKLENVTLQDLGTCKKVTVDKDNTTIVDGAGNRADIEGRVKQIRAEIEETKSDYDREKLQERLAKIVGGVAVIRVGAATEIEMKEKKARVEDALHATRAAVEEGIVPGGGVAFIRSIGALADAKLPDEEQQGLNIVRRALEEPLRQIAANAGCEGSIVVEKVKESNGTHGFDAETEQYVDMLKAGIIDPTKVARFALQNAASVASLLLTTEAMIAEKPKKKEPPMPAMPSDMGDYD</sequence>
<comment type="function">
    <text evidence="1">Together with its co-chaperonin GroES, plays an essential role in assisting protein folding. The GroEL-GroES system forms a nano-cage that allows encapsulation of the non-native substrate proteins and provides a physical environment optimized to promote and accelerate protein folding.</text>
</comment>
<comment type="catalytic activity">
    <reaction evidence="1">
        <text>ATP + H2O + a folded polypeptide = ADP + phosphate + an unfolded polypeptide.</text>
        <dbReference type="EC" id="5.6.1.7"/>
    </reaction>
</comment>
<comment type="subunit">
    <text evidence="1">Forms a cylinder of 14 subunits composed of two heptameric rings stacked back-to-back. Interacts with the co-chaperonin GroES.</text>
</comment>
<comment type="subcellular location">
    <subcellularLocation>
        <location evidence="1">Cytoplasm</location>
    </subcellularLocation>
</comment>
<comment type="similarity">
    <text evidence="1">Belongs to the chaperonin (HSP60) family.</text>
</comment>
<organism>
    <name type="scientific">Syntrophus aciditrophicus (strain SB)</name>
    <dbReference type="NCBI Taxonomy" id="56780"/>
    <lineage>
        <taxon>Bacteria</taxon>
        <taxon>Pseudomonadati</taxon>
        <taxon>Thermodesulfobacteriota</taxon>
        <taxon>Syntrophia</taxon>
        <taxon>Syntrophales</taxon>
        <taxon>Syntrophaceae</taxon>
        <taxon>Syntrophus</taxon>
    </lineage>
</organism>
<dbReference type="EC" id="5.6.1.7" evidence="1"/>
<dbReference type="EMBL" id="CP000252">
    <property type="protein sequence ID" value="ABC77600.1"/>
    <property type="molecule type" value="Genomic_DNA"/>
</dbReference>
<dbReference type="RefSeq" id="WP_011417622.1">
    <property type="nucleotide sequence ID" value="NC_007759.1"/>
</dbReference>
<dbReference type="SMR" id="Q2LU42"/>
<dbReference type="FunCoup" id="Q2LU42">
    <property type="interactions" value="668"/>
</dbReference>
<dbReference type="STRING" id="56780.SYN_01909"/>
<dbReference type="KEGG" id="sat:SYN_01909"/>
<dbReference type="eggNOG" id="COG0459">
    <property type="taxonomic scope" value="Bacteria"/>
</dbReference>
<dbReference type="HOGENOM" id="CLU_016503_3_0_7"/>
<dbReference type="InParanoid" id="Q2LU42"/>
<dbReference type="OrthoDB" id="9766614at2"/>
<dbReference type="Proteomes" id="UP000001933">
    <property type="component" value="Chromosome"/>
</dbReference>
<dbReference type="GO" id="GO:0005737">
    <property type="term" value="C:cytoplasm"/>
    <property type="evidence" value="ECO:0007669"/>
    <property type="project" value="UniProtKB-SubCell"/>
</dbReference>
<dbReference type="GO" id="GO:0005524">
    <property type="term" value="F:ATP binding"/>
    <property type="evidence" value="ECO:0007669"/>
    <property type="project" value="UniProtKB-UniRule"/>
</dbReference>
<dbReference type="GO" id="GO:0140662">
    <property type="term" value="F:ATP-dependent protein folding chaperone"/>
    <property type="evidence" value="ECO:0007669"/>
    <property type="project" value="InterPro"/>
</dbReference>
<dbReference type="GO" id="GO:0016853">
    <property type="term" value="F:isomerase activity"/>
    <property type="evidence" value="ECO:0007669"/>
    <property type="project" value="UniProtKB-KW"/>
</dbReference>
<dbReference type="GO" id="GO:0051082">
    <property type="term" value="F:unfolded protein binding"/>
    <property type="evidence" value="ECO:0007669"/>
    <property type="project" value="UniProtKB-UniRule"/>
</dbReference>
<dbReference type="GO" id="GO:0042026">
    <property type="term" value="P:protein refolding"/>
    <property type="evidence" value="ECO:0007669"/>
    <property type="project" value="UniProtKB-UniRule"/>
</dbReference>
<dbReference type="CDD" id="cd03344">
    <property type="entry name" value="GroEL"/>
    <property type="match status" value="1"/>
</dbReference>
<dbReference type="FunFam" id="3.50.7.10:FF:000001">
    <property type="entry name" value="60 kDa chaperonin"/>
    <property type="match status" value="1"/>
</dbReference>
<dbReference type="Gene3D" id="3.50.7.10">
    <property type="entry name" value="GroEL"/>
    <property type="match status" value="1"/>
</dbReference>
<dbReference type="Gene3D" id="1.10.560.10">
    <property type="entry name" value="GroEL-like equatorial domain"/>
    <property type="match status" value="1"/>
</dbReference>
<dbReference type="Gene3D" id="3.30.260.10">
    <property type="entry name" value="TCP-1-like chaperonin intermediate domain"/>
    <property type="match status" value="1"/>
</dbReference>
<dbReference type="HAMAP" id="MF_00600">
    <property type="entry name" value="CH60"/>
    <property type="match status" value="1"/>
</dbReference>
<dbReference type="InterPro" id="IPR018370">
    <property type="entry name" value="Chaperonin_Cpn60_CS"/>
</dbReference>
<dbReference type="InterPro" id="IPR001844">
    <property type="entry name" value="Cpn60/GroEL"/>
</dbReference>
<dbReference type="InterPro" id="IPR002423">
    <property type="entry name" value="Cpn60/GroEL/TCP-1"/>
</dbReference>
<dbReference type="InterPro" id="IPR027409">
    <property type="entry name" value="GroEL-like_apical_dom_sf"/>
</dbReference>
<dbReference type="InterPro" id="IPR027413">
    <property type="entry name" value="GROEL-like_equatorial_sf"/>
</dbReference>
<dbReference type="InterPro" id="IPR027410">
    <property type="entry name" value="TCP-1-like_intermed_sf"/>
</dbReference>
<dbReference type="NCBIfam" id="TIGR02348">
    <property type="entry name" value="GroEL"/>
    <property type="match status" value="1"/>
</dbReference>
<dbReference type="NCBIfam" id="NF000592">
    <property type="entry name" value="PRK00013.1"/>
    <property type="match status" value="1"/>
</dbReference>
<dbReference type="NCBIfam" id="NF009487">
    <property type="entry name" value="PRK12849.1"/>
    <property type="match status" value="1"/>
</dbReference>
<dbReference type="NCBIfam" id="NF009488">
    <property type="entry name" value="PRK12850.1"/>
    <property type="match status" value="1"/>
</dbReference>
<dbReference type="NCBIfam" id="NF009489">
    <property type="entry name" value="PRK12851.1"/>
    <property type="match status" value="1"/>
</dbReference>
<dbReference type="PANTHER" id="PTHR45633">
    <property type="entry name" value="60 KDA HEAT SHOCK PROTEIN, MITOCHONDRIAL"/>
    <property type="match status" value="1"/>
</dbReference>
<dbReference type="Pfam" id="PF00118">
    <property type="entry name" value="Cpn60_TCP1"/>
    <property type="match status" value="1"/>
</dbReference>
<dbReference type="PRINTS" id="PR00298">
    <property type="entry name" value="CHAPERONIN60"/>
</dbReference>
<dbReference type="SUPFAM" id="SSF52029">
    <property type="entry name" value="GroEL apical domain-like"/>
    <property type="match status" value="1"/>
</dbReference>
<dbReference type="SUPFAM" id="SSF48592">
    <property type="entry name" value="GroEL equatorial domain-like"/>
    <property type="match status" value="1"/>
</dbReference>
<dbReference type="SUPFAM" id="SSF54849">
    <property type="entry name" value="GroEL-intermediate domain like"/>
    <property type="match status" value="1"/>
</dbReference>
<dbReference type="PROSITE" id="PS00296">
    <property type="entry name" value="CHAPERONINS_CPN60"/>
    <property type="match status" value="1"/>
</dbReference>
<name>CH603_SYNAS</name>
<feature type="chain" id="PRO_0000257012" description="Chaperonin GroEL 3">
    <location>
        <begin position="1"/>
        <end position="542"/>
    </location>
</feature>
<feature type="region of interest" description="Disordered" evidence="2">
    <location>
        <begin position="523"/>
        <end position="542"/>
    </location>
</feature>
<feature type="binding site" evidence="1">
    <location>
        <begin position="30"/>
        <end position="33"/>
    </location>
    <ligand>
        <name>ATP</name>
        <dbReference type="ChEBI" id="CHEBI:30616"/>
    </ligand>
</feature>
<feature type="binding site" evidence="1">
    <location>
        <position position="51"/>
    </location>
    <ligand>
        <name>ATP</name>
        <dbReference type="ChEBI" id="CHEBI:30616"/>
    </ligand>
</feature>
<feature type="binding site" evidence="1">
    <location>
        <begin position="87"/>
        <end position="91"/>
    </location>
    <ligand>
        <name>ATP</name>
        <dbReference type="ChEBI" id="CHEBI:30616"/>
    </ligand>
</feature>
<feature type="binding site" evidence="1">
    <location>
        <position position="415"/>
    </location>
    <ligand>
        <name>ATP</name>
        <dbReference type="ChEBI" id="CHEBI:30616"/>
    </ligand>
</feature>
<feature type="binding site" evidence="1">
    <location>
        <position position="494"/>
    </location>
    <ligand>
        <name>ATP</name>
        <dbReference type="ChEBI" id="CHEBI:30616"/>
    </ligand>
</feature>
<keyword id="KW-0067">ATP-binding</keyword>
<keyword id="KW-0143">Chaperone</keyword>
<keyword id="KW-0963">Cytoplasm</keyword>
<keyword id="KW-0413">Isomerase</keyword>
<keyword id="KW-0547">Nucleotide-binding</keyword>
<keyword id="KW-1185">Reference proteome</keyword>
<evidence type="ECO:0000255" key="1">
    <source>
        <dbReference type="HAMAP-Rule" id="MF_00600"/>
    </source>
</evidence>
<evidence type="ECO:0000256" key="2">
    <source>
        <dbReference type="SAM" id="MobiDB-lite"/>
    </source>
</evidence>
<proteinExistence type="inferred from homology"/>
<accession>Q2LU42</accession>
<protein>
    <recommendedName>
        <fullName evidence="1">Chaperonin GroEL 3</fullName>
        <ecNumber evidence="1">5.6.1.7</ecNumber>
    </recommendedName>
    <alternativeName>
        <fullName evidence="1">60 kDa chaperonin 3</fullName>
    </alternativeName>
    <alternativeName>
        <fullName evidence="1">Chaperonin-60 3</fullName>
        <shortName evidence="1">Cpn60 3</shortName>
    </alternativeName>
</protein>
<reference key="1">
    <citation type="journal article" date="2007" name="Proc. Natl. Acad. Sci. U.S.A.">
        <title>The genome of Syntrophus aciditrophicus: life at the thermodynamic limit of microbial growth.</title>
        <authorList>
            <person name="McInerney M.J."/>
            <person name="Rohlin L."/>
            <person name="Mouttaki H."/>
            <person name="Kim U."/>
            <person name="Krupp R.S."/>
            <person name="Rios-Hernandez L."/>
            <person name="Sieber J."/>
            <person name="Struchtemeyer C.G."/>
            <person name="Bhattacharyya A."/>
            <person name="Campbell J.W."/>
            <person name="Gunsalus R.P."/>
        </authorList>
    </citation>
    <scope>NUCLEOTIDE SEQUENCE [LARGE SCALE GENOMIC DNA]</scope>
    <source>
        <strain>SB</strain>
    </source>
</reference>